<proteinExistence type="inferred from homology"/>
<gene>
    <name type="ordered locus">PSM_A2567</name>
</gene>
<organism>
    <name type="scientific">Pseudoalteromonas sp. (strain SM9913)</name>
    <dbReference type="NCBI Taxonomy" id="234831"/>
    <lineage>
        <taxon>Bacteria</taxon>
        <taxon>Pseudomonadati</taxon>
        <taxon>Pseudomonadota</taxon>
        <taxon>Gammaproteobacteria</taxon>
        <taxon>Alteromonadales</taxon>
        <taxon>Pseudoalteromonadaceae</taxon>
        <taxon>Pseudoalteromonas</taxon>
    </lineage>
</organism>
<evidence type="ECO:0000250" key="1">
    <source>
        <dbReference type="UniProtKB" id="P9WP65"/>
    </source>
</evidence>
<evidence type="ECO:0000250" key="2">
    <source>
        <dbReference type="UniProtKB" id="Q6XBH1"/>
    </source>
</evidence>
<evidence type="ECO:0000305" key="3"/>
<reference key="1">
    <citation type="journal article" date="2011" name="ISME J.">
        <title>Comparative genomics reveals a deep-sea sediment-adapted life style of Pseudoalteromonas sp. SM9913.</title>
        <authorList>
            <person name="Qin Q.L."/>
            <person name="Li Y."/>
            <person name="Zhang Y.J."/>
            <person name="Zhou Z.M."/>
            <person name="Zhang W.X."/>
            <person name="Chen X.L."/>
            <person name="Zhang X.Y."/>
            <person name="Zhou B.C."/>
            <person name="Wang L."/>
            <person name="Zhang Y.Z."/>
        </authorList>
    </citation>
    <scope>NUCLEOTIDE SEQUENCE [LARGE SCALE GENOMIC DNA]</scope>
    <source>
        <strain>SM9913</strain>
    </source>
</reference>
<protein>
    <recommendedName>
        <fullName evidence="1">Probable cyclic nucleotide phosphodiesterase PSM_A2567</fullName>
        <ecNumber evidence="1">3.1.4.-</ecNumber>
    </recommendedName>
</protein>
<dbReference type="EC" id="3.1.4.-" evidence="1"/>
<dbReference type="EMBL" id="CP001796">
    <property type="protein sequence ID" value="ADT69481.1"/>
    <property type="molecule type" value="Genomic_DNA"/>
</dbReference>
<dbReference type="RefSeq" id="WP_013465837.1">
    <property type="nucleotide sequence ID" value="NC_014803.1"/>
</dbReference>
<dbReference type="SMR" id="E6RHP9"/>
<dbReference type="KEGG" id="psm:PSM_A2567"/>
<dbReference type="HOGENOM" id="CLU_070320_0_0_6"/>
<dbReference type="GO" id="GO:0004115">
    <property type="term" value="F:3',5'-cyclic-AMP phosphodiesterase activity"/>
    <property type="evidence" value="ECO:0007669"/>
    <property type="project" value="UniProtKB-EC"/>
</dbReference>
<dbReference type="GO" id="GO:0046872">
    <property type="term" value="F:metal ion binding"/>
    <property type="evidence" value="ECO:0007669"/>
    <property type="project" value="UniProtKB-KW"/>
</dbReference>
<dbReference type="GO" id="GO:0000166">
    <property type="term" value="F:nucleotide binding"/>
    <property type="evidence" value="ECO:0007669"/>
    <property type="project" value="UniProtKB-KW"/>
</dbReference>
<dbReference type="Gene3D" id="3.60.21.10">
    <property type="match status" value="1"/>
</dbReference>
<dbReference type="InterPro" id="IPR004843">
    <property type="entry name" value="Calcineurin-like_PHP_ApaH"/>
</dbReference>
<dbReference type="InterPro" id="IPR050884">
    <property type="entry name" value="CNP_phosphodiesterase-III"/>
</dbReference>
<dbReference type="InterPro" id="IPR029052">
    <property type="entry name" value="Metallo-depent_PP-like"/>
</dbReference>
<dbReference type="PANTHER" id="PTHR42988:SF2">
    <property type="entry name" value="CYCLIC NUCLEOTIDE PHOSPHODIESTERASE CBUA0032-RELATED"/>
    <property type="match status" value="1"/>
</dbReference>
<dbReference type="PANTHER" id="PTHR42988">
    <property type="entry name" value="PHOSPHOHYDROLASE"/>
    <property type="match status" value="1"/>
</dbReference>
<dbReference type="Pfam" id="PF00149">
    <property type="entry name" value="Metallophos"/>
    <property type="match status" value="1"/>
</dbReference>
<dbReference type="SUPFAM" id="SSF56300">
    <property type="entry name" value="Metallo-dependent phosphatases"/>
    <property type="match status" value="1"/>
</dbReference>
<sequence>MAWFDDTYYFEQAQLRIAHITDCHLFSDKQGEYFGVNTAEHFTRALTDIAKQQPDALIFGGDLTQDHSFNSYLLFAELIHNSDLDCPVFWVPGNHDEIDQLNLISGGQIQRAKHIVAQGFELILINSKGNTPAGWVTPSHLEEIMACLVDSDNRHIAFCHHNPLPINGYLDKHMLENGPQLLNLLVNNGRVDALFHGHVHNDYQQQFRELDIYATPASSVQFTKHSATWQQEDKGAAYRMLHLNAEQQKVHIRTDVVWLNE</sequence>
<feature type="chain" id="PRO_0000413372" description="Probable cyclic nucleotide phosphodiesterase PSM_A2567">
    <location>
        <begin position="1"/>
        <end position="261"/>
    </location>
</feature>
<feature type="binding site" evidence="2">
    <location>
        <position position="22"/>
    </location>
    <ligand>
        <name>Fe cation</name>
        <dbReference type="ChEBI" id="CHEBI:24875"/>
        <label>1</label>
    </ligand>
</feature>
<feature type="binding site" evidence="1">
    <location>
        <position position="24"/>
    </location>
    <ligand>
        <name>AMP</name>
        <dbReference type="ChEBI" id="CHEBI:456215"/>
    </ligand>
</feature>
<feature type="binding site" evidence="2">
    <location>
        <position position="24"/>
    </location>
    <ligand>
        <name>Fe cation</name>
        <dbReference type="ChEBI" id="CHEBI:24875"/>
        <label>1</label>
    </ligand>
</feature>
<feature type="binding site" evidence="1">
    <location>
        <position position="62"/>
    </location>
    <ligand>
        <name>AMP</name>
        <dbReference type="ChEBI" id="CHEBI:456215"/>
    </ligand>
</feature>
<feature type="binding site" evidence="2">
    <location>
        <position position="62"/>
    </location>
    <ligand>
        <name>Fe cation</name>
        <dbReference type="ChEBI" id="CHEBI:24875"/>
        <label>1</label>
    </ligand>
</feature>
<feature type="binding site" evidence="2">
    <location>
        <position position="62"/>
    </location>
    <ligand>
        <name>Fe cation</name>
        <dbReference type="ChEBI" id="CHEBI:24875"/>
        <label>2</label>
    </ligand>
</feature>
<feature type="binding site" evidence="1">
    <location>
        <begin position="94"/>
        <end position="95"/>
    </location>
    <ligand>
        <name>AMP</name>
        <dbReference type="ChEBI" id="CHEBI:456215"/>
    </ligand>
</feature>
<feature type="binding site" evidence="2">
    <location>
        <position position="94"/>
    </location>
    <ligand>
        <name>Fe cation</name>
        <dbReference type="ChEBI" id="CHEBI:24875"/>
        <label>2</label>
    </ligand>
</feature>
<feature type="binding site" evidence="2">
    <location>
        <position position="160"/>
    </location>
    <ligand>
        <name>Fe cation</name>
        <dbReference type="ChEBI" id="CHEBI:24875"/>
        <label>2</label>
    </ligand>
</feature>
<feature type="binding site" evidence="2">
    <location>
        <position position="198"/>
    </location>
    <ligand>
        <name>Fe cation</name>
        <dbReference type="ChEBI" id="CHEBI:24875"/>
        <label>2</label>
    </ligand>
</feature>
<feature type="binding site" evidence="1">
    <location>
        <position position="200"/>
    </location>
    <ligand>
        <name>AMP</name>
        <dbReference type="ChEBI" id="CHEBI:456215"/>
    </ligand>
</feature>
<feature type="binding site" evidence="2">
    <location>
        <position position="200"/>
    </location>
    <ligand>
        <name>Fe cation</name>
        <dbReference type="ChEBI" id="CHEBI:24875"/>
        <label>1</label>
    </ligand>
</feature>
<accession>E6RHP9</accession>
<keyword id="KW-0378">Hydrolase</keyword>
<keyword id="KW-0408">Iron</keyword>
<keyword id="KW-0479">Metal-binding</keyword>
<keyword id="KW-0547">Nucleotide-binding</keyword>
<name>CNPD3_PSEU9</name>
<comment type="cofactor">
    <cofactor evidence="2">
        <name>Fe(2+)</name>
        <dbReference type="ChEBI" id="CHEBI:29033"/>
    </cofactor>
    <text evidence="2">Binds 2 Fe(2+) ions per subunit.</text>
</comment>
<comment type="similarity">
    <text evidence="3">Belongs to the cyclic nucleotide phosphodiesterase class-III family.</text>
</comment>